<accession>P06716</accession>
<reference key="1">
    <citation type="journal article" date="1986" name="J. Bacteriol.">
        <title>DNA and amino acid sequence analysis of structural and immunity genes of colicins Ia and Ib.</title>
        <authorList>
            <person name="Mankovich J.A."/>
            <person name="Hsu C.-H."/>
            <person name="Konisky J."/>
        </authorList>
    </citation>
    <scope>NUCLEOTIDE SEQUENCE [GENOMIC DNA]</scope>
    <source>
        <plasmid>ColIa-CA53</plasmid>
    </source>
</reference>
<reference key="2">
    <citation type="submission" date="2000-02" db="EMBL/GenBank/DDBJ databases">
        <authorList>
            <person name="Konisky J."/>
        </authorList>
    </citation>
    <scope>SEQUENCE REVISION TO 304</scope>
</reference>
<reference key="3">
    <citation type="journal article" date="1994" name="Proc. Natl. Acad. Sci. U.S.A.">
        <title>Nucleotide polymorphism in colicin E1 and Ia plasmids from natural isolates of Escherichia coli.</title>
        <authorList>
            <person name="Riley M.A."/>
            <person name="Tan Y."/>
            <person name="Wang J."/>
        </authorList>
    </citation>
    <scope>NUCLEOTIDE SEQUENCE [GENOMIC DNA]</scope>
    <source>
        <plasmid>ColIa-EC28</plasmid>
    </source>
</reference>
<reference key="4">
    <citation type="journal article" date="1997" name="Nature">
        <title>Crystal structure of colicin Ia.</title>
        <authorList>
            <person name="Wiener M."/>
            <person name="Freymann D."/>
            <person name="Ghosh P."/>
            <person name="Stroud R.M."/>
        </authorList>
    </citation>
    <scope>X-RAY CRYSTALLOGRAPHY (3.0 ANGSTROMS) OF 23-624</scope>
    <source>
        <plasmid>ColIa-CA53</plasmid>
    </source>
</reference>
<feature type="chain" id="PRO_0000218675" description="Colicin-Ia">
    <location>
        <begin position="1"/>
        <end position="626"/>
    </location>
</feature>
<feature type="transmembrane region" description="Helical">
    <location>
        <begin position="580"/>
        <end position="594"/>
    </location>
</feature>
<feature type="transmembrane region" description="Helical">
    <location>
        <begin position="597"/>
        <end position="612"/>
    </location>
</feature>
<feature type="region of interest" description="Translocation (T)">
    <location>
        <begin position="23"/>
        <end position="225"/>
    </location>
</feature>
<feature type="region of interest" description="Disordered" evidence="1">
    <location>
        <begin position="276"/>
        <end position="308"/>
    </location>
</feature>
<feature type="region of interest" description="Receptor-binding (R)">
    <location>
        <begin position="282"/>
        <end position="385"/>
    </location>
</feature>
<feature type="region of interest" description="Channel (C)">
    <location>
        <begin position="450"/>
        <end position="626"/>
    </location>
</feature>
<feature type="compositionally biased region" description="Polar residues" evidence="1">
    <location>
        <begin position="276"/>
        <end position="286"/>
    </location>
</feature>
<feature type="sequence conflict" description="In Ref. 3; AAA59396." evidence="2" ref="3">
    <original>H</original>
    <variation>D</variation>
    <location>
        <position position="304"/>
    </location>
</feature>
<feature type="helix" evidence="3">
    <location>
        <begin position="48"/>
        <end position="51"/>
    </location>
</feature>
<feature type="helix" evidence="3">
    <location>
        <begin position="67"/>
        <end position="121"/>
    </location>
</feature>
<feature type="helix" evidence="3">
    <location>
        <begin position="126"/>
        <end position="168"/>
    </location>
</feature>
<feature type="strand" evidence="3">
    <location>
        <begin position="172"/>
        <end position="174"/>
    </location>
</feature>
<feature type="helix" evidence="3">
    <location>
        <begin position="176"/>
        <end position="282"/>
    </location>
</feature>
<feature type="helix" evidence="4">
    <location>
        <begin position="285"/>
        <end position="291"/>
    </location>
</feature>
<feature type="turn" evidence="4">
    <location>
        <begin position="293"/>
        <end position="295"/>
    </location>
</feature>
<feature type="strand" evidence="4">
    <location>
        <begin position="298"/>
        <end position="308"/>
    </location>
</feature>
<feature type="turn" evidence="4">
    <location>
        <begin position="312"/>
        <end position="314"/>
    </location>
</feature>
<feature type="strand" evidence="4">
    <location>
        <begin position="316"/>
        <end position="326"/>
    </location>
</feature>
<feature type="helix" evidence="4">
    <location>
        <begin position="329"/>
        <end position="337"/>
    </location>
</feature>
<feature type="helix" evidence="4">
    <location>
        <begin position="340"/>
        <end position="346"/>
    </location>
</feature>
<feature type="helix" evidence="4">
    <location>
        <begin position="359"/>
        <end position="383"/>
    </location>
</feature>
<feature type="helix" evidence="3">
    <location>
        <begin position="470"/>
        <end position="480"/>
    </location>
</feature>
<feature type="turn" evidence="3">
    <location>
        <begin position="481"/>
        <end position="484"/>
    </location>
</feature>
<feature type="helix" evidence="3">
    <location>
        <begin position="490"/>
        <end position="499"/>
    </location>
</feature>
<feature type="helix" evidence="3">
    <location>
        <begin position="501"/>
        <end position="504"/>
    </location>
</feature>
<feature type="helix" evidence="3">
    <location>
        <begin position="511"/>
        <end position="521"/>
    </location>
</feature>
<feature type="helix" evidence="3">
    <location>
        <begin position="525"/>
        <end position="539"/>
    </location>
</feature>
<feature type="helix" evidence="3">
    <location>
        <begin position="548"/>
        <end position="560"/>
    </location>
</feature>
<feature type="helix" evidence="3">
    <location>
        <begin position="565"/>
        <end position="571"/>
    </location>
</feature>
<feature type="turn" evidence="3">
    <location>
        <begin position="572"/>
        <end position="574"/>
    </location>
</feature>
<feature type="helix" evidence="3">
    <location>
        <begin position="580"/>
        <end position="591"/>
    </location>
</feature>
<feature type="helix" evidence="3">
    <location>
        <begin position="597"/>
        <end position="612"/>
    </location>
</feature>
<feature type="helix" evidence="3">
    <location>
        <begin position="614"/>
        <end position="621"/>
    </location>
</feature>
<protein>
    <recommendedName>
        <fullName>Colicin-Ia</fullName>
    </recommendedName>
</protein>
<dbReference type="EMBL" id="M13819">
    <property type="protein sequence ID" value="AAA23182.2"/>
    <property type="molecule type" value="Genomic_DNA"/>
</dbReference>
<dbReference type="EMBL" id="U15622">
    <property type="protein sequence ID" value="AAA59396.1"/>
    <property type="molecule type" value="Genomic_DNA"/>
</dbReference>
<dbReference type="PIR" id="C25035">
    <property type="entry name" value="C25035"/>
</dbReference>
<dbReference type="RefSeq" id="WP_001582575.1">
    <property type="nucleotide sequence ID" value="NZ_WSVS01000050.1"/>
</dbReference>
<dbReference type="PDB" id="1CII">
    <property type="method" value="X-ray"/>
    <property type="resolution" value="3.00 A"/>
    <property type="chains" value="A=23-624"/>
</dbReference>
<dbReference type="PDB" id="2HDI">
    <property type="method" value="X-ray"/>
    <property type="resolution" value="2.50 A"/>
    <property type="chains" value="B=282-385"/>
</dbReference>
<dbReference type="PDBsum" id="1CII"/>
<dbReference type="PDBsum" id="2HDI"/>
<dbReference type="SMR" id="P06716"/>
<dbReference type="IntAct" id="P06716">
    <property type="interactions" value="1"/>
</dbReference>
<dbReference type="MINT" id="P06716"/>
<dbReference type="DrugBank" id="DB04147">
    <property type="generic name" value="Dodecyldimethylamine N-oxide"/>
</dbReference>
<dbReference type="TCDB" id="1.C.1.1.1">
    <property type="family name" value="the channel-forming colicin (colicin) family"/>
</dbReference>
<dbReference type="EvolutionaryTrace" id="P06716"/>
<dbReference type="GO" id="GO:0005886">
    <property type="term" value="C:plasma membrane"/>
    <property type="evidence" value="ECO:0007669"/>
    <property type="project" value="UniProtKB-SubCell"/>
</dbReference>
<dbReference type="GO" id="GO:0140911">
    <property type="term" value="F:pore-forming activity"/>
    <property type="evidence" value="ECO:0007669"/>
    <property type="project" value="InterPro"/>
</dbReference>
<dbReference type="GO" id="GO:0050829">
    <property type="term" value="P:defense response to Gram-negative bacterium"/>
    <property type="evidence" value="ECO:0007669"/>
    <property type="project" value="InterPro"/>
</dbReference>
<dbReference type="GO" id="GO:0031640">
    <property type="term" value="P:killing of cells of another organism"/>
    <property type="evidence" value="ECO:0007669"/>
    <property type="project" value="UniProtKB-KW"/>
</dbReference>
<dbReference type="Gene3D" id="1.10.490.30">
    <property type="entry name" value="Colicin"/>
    <property type="match status" value="1"/>
</dbReference>
<dbReference type="Gene3D" id="1.20.250.10">
    <property type="entry name" value="Colicin Ia, domain 1"/>
    <property type="match status" value="2"/>
</dbReference>
<dbReference type="InterPro" id="IPR000293">
    <property type="entry name" value="Channel_colicin_C"/>
</dbReference>
<dbReference type="InterPro" id="IPR038283">
    <property type="entry name" value="Channel_colicin_C_sf"/>
</dbReference>
<dbReference type="InterPro" id="IPR014740">
    <property type="entry name" value="Channel_colicin_cen"/>
</dbReference>
<dbReference type="InterPro" id="IPR014739">
    <property type="entry name" value="Channel_colicin_N_sf"/>
</dbReference>
<dbReference type="Pfam" id="PF01024">
    <property type="entry name" value="Colicin"/>
    <property type="match status" value="1"/>
</dbReference>
<dbReference type="Pfam" id="PF11504">
    <property type="entry name" value="Colicin_Ia"/>
    <property type="match status" value="1"/>
</dbReference>
<dbReference type="PRINTS" id="PR00280">
    <property type="entry name" value="CHANLCOLICIN"/>
</dbReference>
<dbReference type="SUPFAM" id="SSF56837">
    <property type="entry name" value="Colicin"/>
    <property type="match status" value="1"/>
</dbReference>
<dbReference type="SUPFAM" id="SSF58096">
    <property type="entry name" value="Colicin Ia, N-terminal domain"/>
    <property type="match status" value="1"/>
</dbReference>
<dbReference type="PROSITE" id="PS00276">
    <property type="entry name" value="CHANNEL_COLICIN"/>
    <property type="match status" value="1"/>
</dbReference>
<proteinExistence type="evidence at protein level"/>
<evidence type="ECO:0000256" key="1">
    <source>
        <dbReference type="SAM" id="MobiDB-lite"/>
    </source>
</evidence>
<evidence type="ECO:0000305" key="2"/>
<evidence type="ECO:0007829" key="3">
    <source>
        <dbReference type="PDB" id="1CII"/>
    </source>
</evidence>
<evidence type="ECO:0007829" key="4">
    <source>
        <dbReference type="PDB" id="2HDI"/>
    </source>
</evidence>
<organism>
    <name type="scientific">Escherichia coli</name>
    <dbReference type="NCBI Taxonomy" id="562"/>
    <lineage>
        <taxon>Bacteria</taxon>
        <taxon>Pseudomonadati</taxon>
        <taxon>Pseudomonadota</taxon>
        <taxon>Gammaproteobacteria</taxon>
        <taxon>Enterobacterales</taxon>
        <taxon>Enterobacteriaceae</taxon>
        <taxon>Escherichia</taxon>
    </lineage>
</organism>
<gene>
    <name type="primary">cia</name>
</gene>
<keyword id="KW-0002">3D-structure</keyword>
<keyword id="KW-0044">Antibiotic</keyword>
<keyword id="KW-0929">Antimicrobial</keyword>
<keyword id="KW-0078">Bacteriocin</keyword>
<keyword id="KW-1003">Cell membrane</keyword>
<keyword id="KW-0472">Membrane</keyword>
<keyword id="KW-0614">Plasmid</keyword>
<keyword id="KW-0812">Transmembrane</keyword>
<keyword id="KW-1133">Transmembrane helix</keyword>
<comment type="function">
    <text>This colicin is a channel-forming colicin. This class of transmembrane toxins depolarize the cytoplasmic membrane, leading to dissipation of cellular energy.</text>
</comment>
<comment type="function">
    <text>Colicins are polypeptide toxins produced by and active against E.coli and closely related bacteria.</text>
</comment>
<comment type="subcellular location">
    <subcellularLocation>
        <location evidence="2">Cell membrane</location>
        <topology evidence="2">Multi-pass membrane protein</topology>
    </subcellularLocation>
</comment>
<comment type="similarity">
    <text evidence="2">Belongs to the channel forming colicin family.</text>
</comment>
<sequence>MSDPVRITNPGAESLGYDSDGHEIMAVDIYVNPPRVDVFHGTPPAWSSFGNKTIWGGNEWVDDSPTRSDIEKRDKEITAYKNTLSAQQKENENKRTEAGKRLSAAIAAREKDENTLKTLRAGNADAADITRQEFRLLQAELREYGFRTEIAGYDALRLHTESRMLFADADSLRISPREARSLIEQAEKRQKDAQNADKKAADMLAEYERRKGILDTRLSELEKNGGAALAVLDAQQARLLGQQTRNDRAISEARNKLSSVTESLNTARNALTRAEQQLTQQKNTPDGKTIVSPEKFPGRSSTNHSIVVSGDPRFAGTIKITTSAVIDNRANLNYLLSHSGLDYKRNILNDRNPVVTEDVEGDKKIYNAEVAEWDKLRQRLLDARNKITSAESAVNSARNNLSARTNEQKHANDALNALLKEKENIRNQLSGINQKIAEEKRKQDELKATKDAINFTTEFLKSVSEKYGAKAEQLAREMAGQAKGKKIRNVEEALKTYEKYRADINKKINAKDRAAIAAALESVKLSDISSNLNRFSRGLGYAGKFTSLADWITEFGKAVRTENWRPLFVKTETIIAGNAATALVALVFSILTGSALGIIGYGLLMAVTGALIDESLVEKANKFWGI</sequence>
<name>CEIA_ECOLX</name>
<geneLocation type="plasmid">
    <name>ColIa-CA53</name>
</geneLocation>
<geneLocation type="plasmid">
    <name>ColIa-EC28</name>
</geneLocation>